<gene>
    <name type="ordered locus">RBAM_013970</name>
</gene>
<protein>
    <recommendedName>
        <fullName evidence="1">UPF0180 protein RBAM_013970</fullName>
    </recommendedName>
</protein>
<accession>A7Z434</accession>
<feature type="chain" id="PRO_1000081530" description="UPF0180 protein RBAM_013970">
    <location>
        <begin position="1"/>
        <end position="81"/>
    </location>
</feature>
<name>Y1397_BACVZ</name>
<comment type="similarity">
    <text evidence="1">Belongs to the UPF0180 family.</text>
</comment>
<organism>
    <name type="scientific">Bacillus velezensis (strain DSM 23117 / BGSC 10A6 / LMG 26770 / FZB42)</name>
    <name type="common">Bacillus amyloliquefaciens subsp. plantarum</name>
    <dbReference type="NCBI Taxonomy" id="326423"/>
    <lineage>
        <taxon>Bacteria</taxon>
        <taxon>Bacillati</taxon>
        <taxon>Bacillota</taxon>
        <taxon>Bacilli</taxon>
        <taxon>Bacillales</taxon>
        <taxon>Bacillaceae</taxon>
        <taxon>Bacillus</taxon>
        <taxon>Bacillus amyloliquefaciens group</taxon>
    </lineage>
</organism>
<dbReference type="EMBL" id="CP000560">
    <property type="protein sequence ID" value="ABS73760.1"/>
    <property type="molecule type" value="Genomic_DNA"/>
</dbReference>
<dbReference type="RefSeq" id="WP_003154596.1">
    <property type="nucleotide sequence ID" value="NC_009725.2"/>
</dbReference>
<dbReference type="GeneID" id="93080531"/>
<dbReference type="KEGG" id="bay:RBAM_013970"/>
<dbReference type="HOGENOM" id="CLU_187365_0_0_9"/>
<dbReference type="Proteomes" id="UP000001120">
    <property type="component" value="Chromosome"/>
</dbReference>
<dbReference type="HAMAP" id="MF_00506">
    <property type="entry name" value="UPF0180"/>
    <property type="match status" value="1"/>
</dbReference>
<dbReference type="InterPro" id="IPR005370">
    <property type="entry name" value="UPF0180"/>
</dbReference>
<dbReference type="NCBIfam" id="NF002845">
    <property type="entry name" value="PRK03094.1"/>
    <property type="match status" value="1"/>
</dbReference>
<dbReference type="Pfam" id="PF03698">
    <property type="entry name" value="UPF0180"/>
    <property type="match status" value="1"/>
</dbReference>
<sequence>MTKKIGIEQSLSDVEQALKQKGYDVVMMKTPEDAKNCDCCVVTGLDSNVQGIADTSTQAPVITASGMTADEICSEVEKKFH</sequence>
<evidence type="ECO:0000255" key="1">
    <source>
        <dbReference type="HAMAP-Rule" id="MF_00506"/>
    </source>
</evidence>
<reference key="1">
    <citation type="journal article" date="2007" name="Nat. Biotechnol.">
        <title>Comparative analysis of the complete genome sequence of the plant growth-promoting bacterium Bacillus amyloliquefaciens FZB42.</title>
        <authorList>
            <person name="Chen X.H."/>
            <person name="Koumoutsi A."/>
            <person name="Scholz R."/>
            <person name="Eisenreich A."/>
            <person name="Schneider K."/>
            <person name="Heinemeyer I."/>
            <person name="Morgenstern B."/>
            <person name="Voss B."/>
            <person name="Hess W.R."/>
            <person name="Reva O."/>
            <person name="Junge H."/>
            <person name="Voigt B."/>
            <person name="Jungblut P.R."/>
            <person name="Vater J."/>
            <person name="Suessmuth R."/>
            <person name="Liesegang H."/>
            <person name="Strittmatter A."/>
            <person name="Gottschalk G."/>
            <person name="Borriss R."/>
        </authorList>
    </citation>
    <scope>NUCLEOTIDE SEQUENCE [LARGE SCALE GENOMIC DNA]</scope>
    <source>
        <strain>DSM 23117 / BGSC 10A6 / LMG 26770 / FZB42</strain>
    </source>
</reference>
<proteinExistence type="inferred from homology"/>